<comment type="function">
    <text evidence="1">Peptide chain release factor 1 directs the termination of translation in response to the peptide chain termination codons UAG and UAA.</text>
</comment>
<comment type="subcellular location">
    <subcellularLocation>
        <location evidence="1">Cytoplasm</location>
    </subcellularLocation>
</comment>
<comment type="PTM">
    <text evidence="1">Methylated by PrmC. Methylation increases the termination efficiency of RF1.</text>
</comment>
<comment type="similarity">
    <text evidence="1">Belongs to the prokaryotic/mitochondrial release factor family.</text>
</comment>
<gene>
    <name evidence="1" type="primary">prfA</name>
    <name type="ordered locus">PBPRA2845</name>
</gene>
<accession>Q6LNB4</accession>
<name>RF1_PHOPR</name>
<feature type="chain" id="PRO_0000177721" description="Peptide chain release factor 1">
    <location>
        <begin position="1"/>
        <end position="362"/>
    </location>
</feature>
<feature type="region of interest" description="Disordered" evidence="2">
    <location>
        <begin position="285"/>
        <end position="311"/>
    </location>
</feature>
<feature type="compositionally biased region" description="Basic and acidic residues" evidence="2">
    <location>
        <begin position="285"/>
        <end position="295"/>
    </location>
</feature>
<feature type="modified residue" description="N5-methylglutamine" evidence="1">
    <location>
        <position position="237"/>
    </location>
</feature>
<reference key="1">
    <citation type="journal article" date="2005" name="Science">
        <title>Life at depth: Photobacterium profundum genome sequence and expression analysis.</title>
        <authorList>
            <person name="Vezzi A."/>
            <person name="Campanaro S."/>
            <person name="D'Angelo M."/>
            <person name="Simonato F."/>
            <person name="Vitulo N."/>
            <person name="Lauro F.M."/>
            <person name="Cestaro A."/>
            <person name="Malacrida G."/>
            <person name="Simionati B."/>
            <person name="Cannata N."/>
            <person name="Romualdi C."/>
            <person name="Bartlett D.H."/>
            <person name="Valle G."/>
        </authorList>
    </citation>
    <scope>NUCLEOTIDE SEQUENCE [LARGE SCALE GENOMIC DNA]</scope>
    <source>
        <strain>ATCC BAA-1253 / SS9</strain>
    </source>
</reference>
<sequence>MKSSILVKLETLVERYEEIQHLLGDPGIIGDQNKFRALSKEYSQLEDITQCFQAYLGAKDDLEAAEEMAKDDDPEMREMAQEEVKESKANILRLEDELQVLLIPKDPNDDRNCFVEIRAGAGGDEAGIFAGDLFRMYSRYAERRGWRIEVINENRSEQGGYKEMIAKVSGDGAYGVLKFESGGHRVQRVPATESQGRVHTSACTVAVMPEVPEAEIPEINTGDLKIDTFRSSGAGGQHVNTTDSAIRITHLPTGIVVECQDERSQHKNKAKAMSVLAARITKAEEEKRHAEEASTRRNLLGSGDRSDRIRTYNYPQGRVSDHRITLTLYRLNEVMEGDMDSLIQPVIQEHQADELAAMAEQN</sequence>
<protein>
    <recommendedName>
        <fullName evidence="1">Peptide chain release factor 1</fullName>
        <shortName evidence="1">RF-1</shortName>
    </recommendedName>
</protein>
<proteinExistence type="inferred from homology"/>
<dbReference type="EMBL" id="CR378672">
    <property type="protein sequence ID" value="CAG21212.1"/>
    <property type="molecule type" value="Genomic_DNA"/>
</dbReference>
<dbReference type="RefSeq" id="WP_011219484.1">
    <property type="nucleotide sequence ID" value="NC_006370.1"/>
</dbReference>
<dbReference type="SMR" id="Q6LNB4"/>
<dbReference type="STRING" id="298386.PBPRA2845"/>
<dbReference type="KEGG" id="ppr:PBPRA2845"/>
<dbReference type="eggNOG" id="COG0216">
    <property type="taxonomic scope" value="Bacteria"/>
</dbReference>
<dbReference type="HOGENOM" id="CLU_036856_0_1_6"/>
<dbReference type="Proteomes" id="UP000000593">
    <property type="component" value="Chromosome 1"/>
</dbReference>
<dbReference type="GO" id="GO:0005737">
    <property type="term" value="C:cytoplasm"/>
    <property type="evidence" value="ECO:0007669"/>
    <property type="project" value="UniProtKB-SubCell"/>
</dbReference>
<dbReference type="GO" id="GO:0016149">
    <property type="term" value="F:translation release factor activity, codon specific"/>
    <property type="evidence" value="ECO:0007669"/>
    <property type="project" value="UniProtKB-UniRule"/>
</dbReference>
<dbReference type="FunFam" id="3.30.160.20:FF:000004">
    <property type="entry name" value="Peptide chain release factor 1"/>
    <property type="match status" value="1"/>
</dbReference>
<dbReference type="FunFam" id="3.30.70.1660:FF:000002">
    <property type="entry name" value="Peptide chain release factor 1"/>
    <property type="match status" value="1"/>
</dbReference>
<dbReference type="FunFam" id="3.30.70.1660:FF:000004">
    <property type="entry name" value="Peptide chain release factor 1"/>
    <property type="match status" value="1"/>
</dbReference>
<dbReference type="Gene3D" id="3.30.160.20">
    <property type="match status" value="1"/>
</dbReference>
<dbReference type="Gene3D" id="3.30.70.1660">
    <property type="match status" value="1"/>
</dbReference>
<dbReference type="Gene3D" id="6.10.140.1950">
    <property type="match status" value="1"/>
</dbReference>
<dbReference type="HAMAP" id="MF_00093">
    <property type="entry name" value="Rel_fac_1"/>
    <property type="match status" value="1"/>
</dbReference>
<dbReference type="InterPro" id="IPR005139">
    <property type="entry name" value="PCRF"/>
</dbReference>
<dbReference type="InterPro" id="IPR000352">
    <property type="entry name" value="Pep_chain_release_fac_I"/>
</dbReference>
<dbReference type="InterPro" id="IPR045853">
    <property type="entry name" value="Pep_chain_release_fac_I_sf"/>
</dbReference>
<dbReference type="InterPro" id="IPR050057">
    <property type="entry name" value="Prokaryotic/Mito_RF"/>
</dbReference>
<dbReference type="InterPro" id="IPR004373">
    <property type="entry name" value="RF-1"/>
</dbReference>
<dbReference type="NCBIfam" id="TIGR00019">
    <property type="entry name" value="prfA"/>
    <property type="match status" value="1"/>
</dbReference>
<dbReference type="NCBIfam" id="NF001859">
    <property type="entry name" value="PRK00591.1"/>
    <property type="match status" value="1"/>
</dbReference>
<dbReference type="PANTHER" id="PTHR43804">
    <property type="entry name" value="LD18447P"/>
    <property type="match status" value="1"/>
</dbReference>
<dbReference type="PANTHER" id="PTHR43804:SF7">
    <property type="entry name" value="LD18447P"/>
    <property type="match status" value="1"/>
</dbReference>
<dbReference type="Pfam" id="PF03462">
    <property type="entry name" value="PCRF"/>
    <property type="match status" value="1"/>
</dbReference>
<dbReference type="Pfam" id="PF00472">
    <property type="entry name" value="RF-1"/>
    <property type="match status" value="1"/>
</dbReference>
<dbReference type="SMART" id="SM00937">
    <property type="entry name" value="PCRF"/>
    <property type="match status" value="1"/>
</dbReference>
<dbReference type="SUPFAM" id="SSF75620">
    <property type="entry name" value="Release factor"/>
    <property type="match status" value="1"/>
</dbReference>
<dbReference type="PROSITE" id="PS00745">
    <property type="entry name" value="RF_PROK_I"/>
    <property type="match status" value="1"/>
</dbReference>
<evidence type="ECO:0000255" key="1">
    <source>
        <dbReference type="HAMAP-Rule" id="MF_00093"/>
    </source>
</evidence>
<evidence type="ECO:0000256" key="2">
    <source>
        <dbReference type="SAM" id="MobiDB-lite"/>
    </source>
</evidence>
<organism>
    <name type="scientific">Photobacterium profundum (strain SS9)</name>
    <dbReference type="NCBI Taxonomy" id="298386"/>
    <lineage>
        <taxon>Bacteria</taxon>
        <taxon>Pseudomonadati</taxon>
        <taxon>Pseudomonadota</taxon>
        <taxon>Gammaproteobacteria</taxon>
        <taxon>Vibrionales</taxon>
        <taxon>Vibrionaceae</taxon>
        <taxon>Photobacterium</taxon>
    </lineage>
</organism>
<keyword id="KW-0963">Cytoplasm</keyword>
<keyword id="KW-0488">Methylation</keyword>
<keyword id="KW-0648">Protein biosynthesis</keyword>
<keyword id="KW-1185">Reference proteome</keyword>